<proteinExistence type="inferred from homology"/>
<evidence type="ECO:0000255" key="1">
    <source>
        <dbReference type="HAMAP-Rule" id="MF_00267"/>
    </source>
</evidence>
<evidence type="ECO:0000256" key="2">
    <source>
        <dbReference type="SAM" id="MobiDB-lite"/>
    </source>
</evidence>
<name>MINC_ECO55</name>
<keyword id="KW-0131">Cell cycle</keyword>
<keyword id="KW-0132">Cell division</keyword>
<keyword id="KW-1185">Reference proteome</keyword>
<keyword id="KW-0717">Septation</keyword>
<reference key="1">
    <citation type="journal article" date="2009" name="PLoS Genet.">
        <title>Organised genome dynamics in the Escherichia coli species results in highly diverse adaptive paths.</title>
        <authorList>
            <person name="Touchon M."/>
            <person name="Hoede C."/>
            <person name="Tenaillon O."/>
            <person name="Barbe V."/>
            <person name="Baeriswyl S."/>
            <person name="Bidet P."/>
            <person name="Bingen E."/>
            <person name="Bonacorsi S."/>
            <person name="Bouchier C."/>
            <person name="Bouvet O."/>
            <person name="Calteau A."/>
            <person name="Chiapello H."/>
            <person name="Clermont O."/>
            <person name="Cruveiller S."/>
            <person name="Danchin A."/>
            <person name="Diard M."/>
            <person name="Dossat C."/>
            <person name="Karoui M.E."/>
            <person name="Frapy E."/>
            <person name="Garry L."/>
            <person name="Ghigo J.M."/>
            <person name="Gilles A.M."/>
            <person name="Johnson J."/>
            <person name="Le Bouguenec C."/>
            <person name="Lescat M."/>
            <person name="Mangenot S."/>
            <person name="Martinez-Jehanne V."/>
            <person name="Matic I."/>
            <person name="Nassif X."/>
            <person name="Oztas S."/>
            <person name="Petit M.A."/>
            <person name="Pichon C."/>
            <person name="Rouy Z."/>
            <person name="Ruf C.S."/>
            <person name="Schneider D."/>
            <person name="Tourret J."/>
            <person name="Vacherie B."/>
            <person name="Vallenet D."/>
            <person name="Medigue C."/>
            <person name="Rocha E.P.C."/>
            <person name="Denamur E."/>
        </authorList>
    </citation>
    <scope>NUCLEOTIDE SEQUENCE [LARGE SCALE GENOMIC DNA]</scope>
    <source>
        <strain>55989 / EAEC</strain>
    </source>
</reference>
<feature type="chain" id="PRO_1000191243" description="Probable septum site-determining protein MinC">
    <location>
        <begin position="1"/>
        <end position="231"/>
    </location>
</feature>
<feature type="region of interest" description="Disordered" evidence="2">
    <location>
        <begin position="102"/>
        <end position="125"/>
    </location>
</feature>
<sequence>MSNTPIELKGSSFTLSVVHLHEAEPKVIHQALEDKIAQAPAFLKHAPVVLNVSALEDPVNWSAMHKAVSATGLRVIGVSGCKDAQLKAEIEKMGLPILTEGKEKAPRPAPAPQAPAQNTTPVTKTRLIDTPVRSGQRIYAPQCDLIVTSHVSAGAELIADGNIHVYGMMRGRALAGASGDRETQIFCTNLMAELVSIAGEYWLSDQIPAEFYGKAARLQLVENALTVQPLN</sequence>
<gene>
    <name evidence="1" type="primary">minC</name>
    <name type="ordered locus">EC55989_1269</name>
</gene>
<protein>
    <recommendedName>
        <fullName evidence="1">Probable septum site-determining protein MinC</fullName>
    </recommendedName>
</protein>
<organism>
    <name type="scientific">Escherichia coli (strain 55989 / EAEC)</name>
    <dbReference type="NCBI Taxonomy" id="585055"/>
    <lineage>
        <taxon>Bacteria</taxon>
        <taxon>Pseudomonadati</taxon>
        <taxon>Pseudomonadota</taxon>
        <taxon>Gammaproteobacteria</taxon>
        <taxon>Enterobacterales</taxon>
        <taxon>Enterobacteriaceae</taxon>
        <taxon>Escherichia</taxon>
    </lineage>
</organism>
<comment type="function">
    <text evidence="1">Cell division inhibitor that blocks the formation of polar Z ring septums. Rapidly oscillates between the poles of the cell to destabilize FtsZ filaments that have formed before they mature into polar Z rings. Prevents FtsZ polymerization.</text>
</comment>
<comment type="subunit">
    <text evidence="1">Interacts with MinD and FtsZ.</text>
</comment>
<comment type="similarity">
    <text evidence="1">Belongs to the MinC family.</text>
</comment>
<dbReference type="EMBL" id="CU928145">
    <property type="protein sequence ID" value="CAU97128.1"/>
    <property type="molecule type" value="Genomic_DNA"/>
</dbReference>
<dbReference type="RefSeq" id="WP_000072536.1">
    <property type="nucleotide sequence ID" value="NC_011748.1"/>
</dbReference>
<dbReference type="SMR" id="B7LGT4"/>
<dbReference type="GeneID" id="93776258"/>
<dbReference type="KEGG" id="eck:EC55989_1269"/>
<dbReference type="HOGENOM" id="CLU_067812_0_1_6"/>
<dbReference type="Proteomes" id="UP000000746">
    <property type="component" value="Chromosome"/>
</dbReference>
<dbReference type="GO" id="GO:0000902">
    <property type="term" value="P:cell morphogenesis"/>
    <property type="evidence" value="ECO:0007669"/>
    <property type="project" value="InterPro"/>
</dbReference>
<dbReference type="GO" id="GO:0000917">
    <property type="term" value="P:division septum assembly"/>
    <property type="evidence" value="ECO:0007669"/>
    <property type="project" value="UniProtKB-KW"/>
</dbReference>
<dbReference type="GO" id="GO:0051302">
    <property type="term" value="P:regulation of cell division"/>
    <property type="evidence" value="ECO:0007669"/>
    <property type="project" value="InterPro"/>
</dbReference>
<dbReference type="GO" id="GO:1901891">
    <property type="term" value="P:regulation of cell septum assembly"/>
    <property type="evidence" value="ECO:0007669"/>
    <property type="project" value="InterPro"/>
</dbReference>
<dbReference type="FunFam" id="2.160.20.70:FF:000002">
    <property type="entry name" value="Probable septum site-determining protein MinC"/>
    <property type="match status" value="1"/>
</dbReference>
<dbReference type="Gene3D" id="2.160.20.70">
    <property type="match status" value="1"/>
</dbReference>
<dbReference type="Gene3D" id="3.30.70.260">
    <property type="match status" value="1"/>
</dbReference>
<dbReference type="HAMAP" id="MF_00267">
    <property type="entry name" value="MinC"/>
    <property type="match status" value="1"/>
</dbReference>
<dbReference type="InterPro" id="IPR016098">
    <property type="entry name" value="CAP/MinC_C"/>
</dbReference>
<dbReference type="InterPro" id="IPR013033">
    <property type="entry name" value="MinC"/>
</dbReference>
<dbReference type="InterPro" id="IPR036145">
    <property type="entry name" value="MinC_C_sf"/>
</dbReference>
<dbReference type="InterPro" id="IPR007874">
    <property type="entry name" value="MinC_N"/>
</dbReference>
<dbReference type="InterPro" id="IPR005526">
    <property type="entry name" value="Septum_form_inhib_MinC_C"/>
</dbReference>
<dbReference type="NCBIfam" id="TIGR01222">
    <property type="entry name" value="minC"/>
    <property type="match status" value="1"/>
</dbReference>
<dbReference type="PANTHER" id="PTHR34108">
    <property type="entry name" value="SEPTUM SITE-DETERMINING PROTEIN MINC"/>
    <property type="match status" value="1"/>
</dbReference>
<dbReference type="PANTHER" id="PTHR34108:SF1">
    <property type="entry name" value="SEPTUM SITE-DETERMINING PROTEIN MINC"/>
    <property type="match status" value="1"/>
</dbReference>
<dbReference type="Pfam" id="PF03775">
    <property type="entry name" value="MinC_C"/>
    <property type="match status" value="1"/>
</dbReference>
<dbReference type="Pfam" id="PF05209">
    <property type="entry name" value="MinC_N"/>
    <property type="match status" value="1"/>
</dbReference>
<dbReference type="SUPFAM" id="SSF63848">
    <property type="entry name" value="Cell-division inhibitor MinC, C-terminal domain"/>
    <property type="match status" value="1"/>
</dbReference>
<accession>B7LGT4</accession>